<geneLocation type="chloroplast"/>
<keyword id="KW-0004">4Fe-4S</keyword>
<keyword id="KW-0150">Chloroplast</keyword>
<keyword id="KW-0408">Iron</keyword>
<keyword id="KW-0411">Iron-sulfur</keyword>
<keyword id="KW-0472">Membrane</keyword>
<keyword id="KW-0479">Metal-binding</keyword>
<keyword id="KW-0520">NAD</keyword>
<keyword id="KW-0521">NADP</keyword>
<keyword id="KW-0934">Plastid</keyword>
<keyword id="KW-0618">Plastoquinone</keyword>
<keyword id="KW-0874">Quinone</keyword>
<keyword id="KW-1185">Reference proteome</keyword>
<keyword id="KW-0677">Repeat</keyword>
<keyword id="KW-0793">Thylakoid</keyword>
<keyword id="KW-1278">Translocase</keyword>
<dbReference type="EC" id="7.1.1.-" evidence="1"/>
<dbReference type="EMBL" id="DQ345959">
    <property type="protein sequence ID" value="ABC73678.1"/>
    <property type="molecule type" value="Genomic_DNA"/>
</dbReference>
<dbReference type="RefSeq" id="YP_538986.1">
    <property type="nucleotide sequence ID" value="NC_007944.1"/>
</dbReference>
<dbReference type="SMR" id="Q2L959"/>
<dbReference type="GeneID" id="3989237"/>
<dbReference type="KEGG" id="ghi:3989237"/>
<dbReference type="OrthoDB" id="971at41938"/>
<dbReference type="Proteomes" id="UP000189702">
    <property type="component" value="Chloroplast Pltd"/>
</dbReference>
<dbReference type="GO" id="GO:0009535">
    <property type="term" value="C:chloroplast thylakoid membrane"/>
    <property type="evidence" value="ECO:0007669"/>
    <property type="project" value="UniProtKB-SubCell"/>
</dbReference>
<dbReference type="GO" id="GO:0051539">
    <property type="term" value="F:4 iron, 4 sulfur cluster binding"/>
    <property type="evidence" value="ECO:0007669"/>
    <property type="project" value="UniProtKB-KW"/>
</dbReference>
<dbReference type="GO" id="GO:0005506">
    <property type="term" value="F:iron ion binding"/>
    <property type="evidence" value="ECO:0007669"/>
    <property type="project" value="UniProtKB-UniRule"/>
</dbReference>
<dbReference type="GO" id="GO:0008137">
    <property type="term" value="F:NADH dehydrogenase (ubiquinone) activity"/>
    <property type="evidence" value="ECO:0007669"/>
    <property type="project" value="InterPro"/>
</dbReference>
<dbReference type="GO" id="GO:0048038">
    <property type="term" value="F:quinone binding"/>
    <property type="evidence" value="ECO:0007669"/>
    <property type="project" value="UniProtKB-KW"/>
</dbReference>
<dbReference type="GO" id="GO:0019684">
    <property type="term" value="P:photosynthesis, light reaction"/>
    <property type="evidence" value="ECO:0007669"/>
    <property type="project" value="UniProtKB-UniRule"/>
</dbReference>
<dbReference type="FunFam" id="3.30.70.3270:FF:000006">
    <property type="entry name" value="NAD(P)H-quinone oxidoreductase subunit I, chloroplastic"/>
    <property type="match status" value="1"/>
</dbReference>
<dbReference type="Gene3D" id="3.30.70.3270">
    <property type="match status" value="1"/>
</dbReference>
<dbReference type="HAMAP" id="MF_01351">
    <property type="entry name" value="NDH1_NuoI"/>
    <property type="match status" value="1"/>
</dbReference>
<dbReference type="InterPro" id="IPR017896">
    <property type="entry name" value="4Fe4S_Fe-S-bd"/>
</dbReference>
<dbReference type="InterPro" id="IPR017900">
    <property type="entry name" value="4Fe4S_Fe_S_CS"/>
</dbReference>
<dbReference type="InterPro" id="IPR010226">
    <property type="entry name" value="NADH_quinone_OxRdtase_chainI"/>
</dbReference>
<dbReference type="InterPro" id="IPR004497">
    <property type="entry name" value="NDHI"/>
</dbReference>
<dbReference type="NCBIfam" id="TIGR00403">
    <property type="entry name" value="ndhI"/>
    <property type="match status" value="1"/>
</dbReference>
<dbReference type="NCBIfam" id="TIGR01971">
    <property type="entry name" value="NuoI"/>
    <property type="match status" value="1"/>
</dbReference>
<dbReference type="NCBIfam" id="NF004537">
    <property type="entry name" value="PRK05888.1-3"/>
    <property type="match status" value="1"/>
</dbReference>
<dbReference type="PANTHER" id="PTHR47275">
    <property type="entry name" value="NAD(P)H-QUINONE OXIDOREDUCTASE SUBUNIT I, CHLOROPLASTIC"/>
    <property type="match status" value="1"/>
</dbReference>
<dbReference type="PANTHER" id="PTHR47275:SF1">
    <property type="entry name" value="NAD(P)H-QUINONE OXIDOREDUCTASE SUBUNIT I, CHLOROPLASTIC"/>
    <property type="match status" value="1"/>
</dbReference>
<dbReference type="Pfam" id="PF12838">
    <property type="entry name" value="Fer4_7"/>
    <property type="match status" value="1"/>
</dbReference>
<dbReference type="SUPFAM" id="SSF54862">
    <property type="entry name" value="4Fe-4S ferredoxins"/>
    <property type="match status" value="1"/>
</dbReference>
<dbReference type="PROSITE" id="PS00198">
    <property type="entry name" value="4FE4S_FER_1"/>
    <property type="match status" value="2"/>
</dbReference>
<dbReference type="PROSITE" id="PS51379">
    <property type="entry name" value="4FE4S_FER_2"/>
    <property type="match status" value="2"/>
</dbReference>
<protein>
    <recommendedName>
        <fullName evidence="1">NAD(P)H-quinone oxidoreductase subunit I, chloroplastic</fullName>
        <ecNumber evidence="1">7.1.1.-</ecNumber>
    </recommendedName>
    <alternativeName>
        <fullName evidence="1">NAD(P)H dehydrogenase subunit I</fullName>
        <shortName evidence="1">NDH subunit I</shortName>
    </alternativeName>
    <alternativeName>
        <fullName evidence="1">NADH-plastoquinone oxidoreductase subunit I</fullName>
    </alternativeName>
</protein>
<feature type="chain" id="PRO_0000245660" description="NAD(P)H-quinone oxidoreductase subunit I, chloroplastic">
    <location>
        <begin position="1"/>
        <end position="167"/>
    </location>
</feature>
<feature type="domain" description="4Fe-4S ferredoxin-type 1" evidence="1">
    <location>
        <begin position="55"/>
        <end position="84"/>
    </location>
</feature>
<feature type="domain" description="4Fe-4S ferredoxin-type 2" evidence="1">
    <location>
        <begin position="95"/>
        <end position="124"/>
    </location>
</feature>
<feature type="binding site" evidence="1">
    <location>
        <position position="64"/>
    </location>
    <ligand>
        <name>[4Fe-4S] cluster</name>
        <dbReference type="ChEBI" id="CHEBI:49883"/>
        <label>1</label>
    </ligand>
</feature>
<feature type="binding site" evidence="1">
    <location>
        <position position="67"/>
    </location>
    <ligand>
        <name>[4Fe-4S] cluster</name>
        <dbReference type="ChEBI" id="CHEBI:49883"/>
        <label>1</label>
    </ligand>
</feature>
<feature type="binding site" evidence="1">
    <location>
        <position position="70"/>
    </location>
    <ligand>
        <name>[4Fe-4S] cluster</name>
        <dbReference type="ChEBI" id="CHEBI:49883"/>
        <label>1</label>
    </ligand>
</feature>
<feature type="binding site" evidence="1">
    <location>
        <position position="74"/>
    </location>
    <ligand>
        <name>[4Fe-4S] cluster</name>
        <dbReference type="ChEBI" id="CHEBI:49883"/>
        <label>2</label>
    </ligand>
</feature>
<feature type="binding site" evidence="1">
    <location>
        <position position="104"/>
    </location>
    <ligand>
        <name>[4Fe-4S] cluster</name>
        <dbReference type="ChEBI" id="CHEBI:49883"/>
        <label>2</label>
    </ligand>
</feature>
<feature type="binding site" evidence="1">
    <location>
        <position position="107"/>
    </location>
    <ligand>
        <name>[4Fe-4S] cluster</name>
        <dbReference type="ChEBI" id="CHEBI:49883"/>
        <label>2</label>
    </ligand>
</feature>
<feature type="binding site" evidence="1">
    <location>
        <position position="110"/>
    </location>
    <ligand>
        <name>[4Fe-4S] cluster</name>
        <dbReference type="ChEBI" id="CHEBI:49883"/>
        <label>2</label>
    </ligand>
</feature>
<feature type="binding site" evidence="1">
    <location>
        <position position="114"/>
    </location>
    <ligand>
        <name>[4Fe-4S] cluster</name>
        <dbReference type="ChEBI" id="CHEBI:49883"/>
        <label>1</label>
    </ligand>
</feature>
<name>NDHI_GOSHI</name>
<sequence>MFPMVTGFMNYGHQTVRAARYIGQGFMITLSHANRLPVTIQYPYEKLITSERFRGRIHFEFDKCIACEVCVRVCPIDLPVVDWKFETDIRKKRLLNYSIDFGICIFCGNCVEYCPTNCLSMTEEYELSTYDRHELNYNQIALGRLPMSVIDDYTIRTVLNSIQRKTQ</sequence>
<organism>
    <name type="scientific">Gossypium hirsutum</name>
    <name type="common">Upland cotton</name>
    <name type="synonym">Gossypium mexicanum</name>
    <dbReference type="NCBI Taxonomy" id="3635"/>
    <lineage>
        <taxon>Eukaryota</taxon>
        <taxon>Viridiplantae</taxon>
        <taxon>Streptophyta</taxon>
        <taxon>Embryophyta</taxon>
        <taxon>Tracheophyta</taxon>
        <taxon>Spermatophyta</taxon>
        <taxon>Magnoliopsida</taxon>
        <taxon>eudicotyledons</taxon>
        <taxon>Gunneridae</taxon>
        <taxon>Pentapetalae</taxon>
        <taxon>rosids</taxon>
        <taxon>malvids</taxon>
        <taxon>Malvales</taxon>
        <taxon>Malvaceae</taxon>
        <taxon>Malvoideae</taxon>
        <taxon>Gossypium</taxon>
    </lineage>
</organism>
<proteinExistence type="inferred from homology"/>
<accession>Q2L959</accession>
<comment type="function">
    <text evidence="1">NDH shuttles electrons from NAD(P)H:plastoquinone, via FMN and iron-sulfur (Fe-S) centers, to quinones in the photosynthetic chain and possibly in a chloroplast respiratory chain. The immediate electron acceptor for the enzyme in this species is believed to be plastoquinone. Couples the redox reaction to proton translocation, and thus conserves the redox energy in a proton gradient.</text>
</comment>
<comment type="catalytic activity">
    <reaction evidence="1">
        <text>a plastoquinone + NADH + (n+1) H(+)(in) = a plastoquinol + NAD(+) + n H(+)(out)</text>
        <dbReference type="Rhea" id="RHEA:42608"/>
        <dbReference type="Rhea" id="RHEA-COMP:9561"/>
        <dbReference type="Rhea" id="RHEA-COMP:9562"/>
        <dbReference type="ChEBI" id="CHEBI:15378"/>
        <dbReference type="ChEBI" id="CHEBI:17757"/>
        <dbReference type="ChEBI" id="CHEBI:57540"/>
        <dbReference type="ChEBI" id="CHEBI:57945"/>
        <dbReference type="ChEBI" id="CHEBI:62192"/>
    </reaction>
</comment>
<comment type="catalytic activity">
    <reaction evidence="1">
        <text>a plastoquinone + NADPH + (n+1) H(+)(in) = a plastoquinol + NADP(+) + n H(+)(out)</text>
        <dbReference type="Rhea" id="RHEA:42612"/>
        <dbReference type="Rhea" id="RHEA-COMP:9561"/>
        <dbReference type="Rhea" id="RHEA-COMP:9562"/>
        <dbReference type="ChEBI" id="CHEBI:15378"/>
        <dbReference type="ChEBI" id="CHEBI:17757"/>
        <dbReference type="ChEBI" id="CHEBI:57783"/>
        <dbReference type="ChEBI" id="CHEBI:58349"/>
        <dbReference type="ChEBI" id="CHEBI:62192"/>
    </reaction>
</comment>
<comment type="cofactor">
    <cofactor evidence="1">
        <name>[4Fe-4S] cluster</name>
        <dbReference type="ChEBI" id="CHEBI:49883"/>
    </cofactor>
    <text evidence="1">Binds 2 [4Fe-4S] clusters per subunit.</text>
</comment>
<comment type="subunit">
    <text evidence="1">NDH is composed of at least 16 different subunits, 5 of which are encoded in the nucleus.</text>
</comment>
<comment type="subcellular location">
    <subcellularLocation>
        <location evidence="1">Plastid</location>
        <location evidence="1">Chloroplast thylakoid membrane</location>
        <topology evidence="1">Peripheral membrane protein</topology>
    </subcellularLocation>
</comment>
<comment type="similarity">
    <text evidence="1">Belongs to the complex I 23 kDa subunit family.</text>
</comment>
<evidence type="ECO:0000255" key="1">
    <source>
        <dbReference type="HAMAP-Rule" id="MF_01351"/>
    </source>
</evidence>
<gene>
    <name evidence="1" type="primary">ndhI</name>
</gene>
<reference key="1">
    <citation type="journal article" date="2006" name="BMC Genomics">
        <title>The complete chloroplast genome sequence of Gossypium hirsutum: organization and phylogenetic relationships to other angiosperms.</title>
        <authorList>
            <person name="Lee S.-B."/>
            <person name="Kaittanis C."/>
            <person name="Jansen R.K."/>
            <person name="Hostetler J.B."/>
            <person name="Tallon L.J."/>
            <person name="Town C.D."/>
            <person name="Daniell H."/>
        </authorList>
    </citation>
    <scope>NUCLEOTIDE SEQUENCE [LARGE SCALE GENOMIC DNA]</scope>
    <source>
        <strain>cv. Coker 310FR</strain>
    </source>
</reference>